<reference key="1">
    <citation type="journal article" date="2006" name="Genome Res.">
        <title>Skewed genomic variability in strains of the toxigenic bacterial pathogen, Clostridium perfringens.</title>
        <authorList>
            <person name="Myers G.S.A."/>
            <person name="Rasko D.A."/>
            <person name="Cheung J.K."/>
            <person name="Ravel J."/>
            <person name="Seshadri R."/>
            <person name="DeBoy R.T."/>
            <person name="Ren Q."/>
            <person name="Varga J."/>
            <person name="Awad M.M."/>
            <person name="Brinkac L.M."/>
            <person name="Daugherty S.C."/>
            <person name="Haft D.H."/>
            <person name="Dodson R.J."/>
            <person name="Madupu R."/>
            <person name="Nelson W.C."/>
            <person name="Rosovitz M.J."/>
            <person name="Sullivan S.A."/>
            <person name="Khouri H."/>
            <person name="Dimitrov G.I."/>
            <person name="Watkins K.L."/>
            <person name="Mulligan S."/>
            <person name="Benton J."/>
            <person name="Radune D."/>
            <person name="Fisher D.J."/>
            <person name="Atkins H.S."/>
            <person name="Hiscox T."/>
            <person name="Jost B.H."/>
            <person name="Billington S.J."/>
            <person name="Songer J.G."/>
            <person name="McClane B.A."/>
            <person name="Titball R.W."/>
            <person name="Rood J.I."/>
            <person name="Melville S.B."/>
            <person name="Paulsen I.T."/>
        </authorList>
    </citation>
    <scope>NUCLEOTIDE SEQUENCE [LARGE SCALE GENOMIC DNA]</scope>
    <source>
        <strain>SM101 / Type A</strain>
    </source>
</reference>
<sequence length="149" mass="17761">MRCPYCSYEESKVVDSRSAEDYNAIRRRRECLRCSKRYTTYEKVEDIPILVIKKDLSRESFNKEKIISGLIKACQKRPVSRAQIEEIASDIERNISNKMMVEIKSDYIGEMIMERLKDIDEVSYVRFASVYRQFKDINTFMEEIKNLMK</sequence>
<organism>
    <name type="scientific">Clostridium perfringens (strain SM101 / Type A)</name>
    <dbReference type="NCBI Taxonomy" id="289380"/>
    <lineage>
        <taxon>Bacteria</taxon>
        <taxon>Bacillati</taxon>
        <taxon>Bacillota</taxon>
        <taxon>Clostridia</taxon>
        <taxon>Eubacteriales</taxon>
        <taxon>Clostridiaceae</taxon>
        <taxon>Clostridium</taxon>
    </lineage>
</organism>
<proteinExistence type="inferred from homology"/>
<comment type="function">
    <text evidence="1">Negatively regulates transcription of bacterial ribonucleotide reductase nrd genes and operons by binding to NrdR-boxes.</text>
</comment>
<comment type="cofactor">
    <cofactor evidence="1">
        <name>Zn(2+)</name>
        <dbReference type="ChEBI" id="CHEBI:29105"/>
    </cofactor>
    <text evidence="1">Binds 1 zinc ion.</text>
</comment>
<comment type="similarity">
    <text evidence="1">Belongs to the NrdR family.</text>
</comment>
<keyword id="KW-0067">ATP-binding</keyword>
<keyword id="KW-0238">DNA-binding</keyword>
<keyword id="KW-0479">Metal-binding</keyword>
<keyword id="KW-0547">Nucleotide-binding</keyword>
<keyword id="KW-0678">Repressor</keyword>
<keyword id="KW-0804">Transcription</keyword>
<keyword id="KW-0805">Transcription regulation</keyword>
<keyword id="KW-0862">Zinc</keyword>
<keyword id="KW-0863">Zinc-finger</keyword>
<dbReference type="EMBL" id="CP000312">
    <property type="protein sequence ID" value="ABG86714.1"/>
    <property type="molecule type" value="Genomic_DNA"/>
</dbReference>
<dbReference type="RefSeq" id="WP_011592641.1">
    <property type="nucleotide sequence ID" value="NC_008262.1"/>
</dbReference>
<dbReference type="SMR" id="Q0SS62"/>
<dbReference type="KEGG" id="cpr:CPR_1730"/>
<dbReference type="Proteomes" id="UP000001824">
    <property type="component" value="Chromosome"/>
</dbReference>
<dbReference type="GO" id="GO:0005524">
    <property type="term" value="F:ATP binding"/>
    <property type="evidence" value="ECO:0007669"/>
    <property type="project" value="UniProtKB-KW"/>
</dbReference>
<dbReference type="GO" id="GO:0003677">
    <property type="term" value="F:DNA binding"/>
    <property type="evidence" value="ECO:0007669"/>
    <property type="project" value="UniProtKB-KW"/>
</dbReference>
<dbReference type="GO" id="GO:0008270">
    <property type="term" value="F:zinc ion binding"/>
    <property type="evidence" value="ECO:0007669"/>
    <property type="project" value="UniProtKB-UniRule"/>
</dbReference>
<dbReference type="GO" id="GO:0045892">
    <property type="term" value="P:negative regulation of DNA-templated transcription"/>
    <property type="evidence" value="ECO:0007669"/>
    <property type="project" value="UniProtKB-UniRule"/>
</dbReference>
<dbReference type="HAMAP" id="MF_00440">
    <property type="entry name" value="NrdR"/>
    <property type="match status" value="1"/>
</dbReference>
<dbReference type="InterPro" id="IPR005144">
    <property type="entry name" value="ATP-cone_dom"/>
</dbReference>
<dbReference type="InterPro" id="IPR055173">
    <property type="entry name" value="NrdR-like_N"/>
</dbReference>
<dbReference type="InterPro" id="IPR003796">
    <property type="entry name" value="RNR_NrdR-like"/>
</dbReference>
<dbReference type="NCBIfam" id="TIGR00244">
    <property type="entry name" value="transcriptional regulator NrdR"/>
    <property type="match status" value="1"/>
</dbReference>
<dbReference type="PANTHER" id="PTHR30455">
    <property type="entry name" value="TRANSCRIPTIONAL REPRESSOR NRDR"/>
    <property type="match status" value="1"/>
</dbReference>
<dbReference type="PANTHER" id="PTHR30455:SF2">
    <property type="entry name" value="TRANSCRIPTIONAL REPRESSOR NRDR"/>
    <property type="match status" value="1"/>
</dbReference>
<dbReference type="Pfam" id="PF03477">
    <property type="entry name" value="ATP-cone"/>
    <property type="match status" value="1"/>
</dbReference>
<dbReference type="Pfam" id="PF22811">
    <property type="entry name" value="Zn_ribbon_NrdR"/>
    <property type="match status" value="1"/>
</dbReference>
<dbReference type="PROSITE" id="PS51161">
    <property type="entry name" value="ATP_CONE"/>
    <property type="match status" value="1"/>
</dbReference>
<feature type="chain" id="PRO_0000264170" description="Transcriptional repressor NrdR">
    <location>
        <begin position="1"/>
        <end position="149"/>
    </location>
</feature>
<feature type="domain" description="ATP-cone" evidence="1">
    <location>
        <begin position="49"/>
        <end position="139"/>
    </location>
</feature>
<feature type="zinc finger region" evidence="1">
    <location>
        <begin position="3"/>
        <end position="34"/>
    </location>
</feature>
<name>NRDR_CLOPS</name>
<protein>
    <recommendedName>
        <fullName evidence="1">Transcriptional repressor NrdR</fullName>
    </recommendedName>
</protein>
<evidence type="ECO:0000255" key="1">
    <source>
        <dbReference type="HAMAP-Rule" id="MF_00440"/>
    </source>
</evidence>
<accession>Q0SS62</accession>
<gene>
    <name evidence="1" type="primary">nrdR</name>
    <name type="ordered locus">CPR_1730</name>
</gene>